<comment type="function">
    <text evidence="1">Involved in phosphonate degradation.</text>
</comment>
<comment type="catalytic activity">
    <reaction evidence="1">
        <text>(2-aminoethyl)phosphonate + pyruvate = phosphonoacetaldehyde + L-alanine</text>
        <dbReference type="Rhea" id="RHEA:17021"/>
        <dbReference type="ChEBI" id="CHEBI:15361"/>
        <dbReference type="ChEBI" id="CHEBI:57418"/>
        <dbReference type="ChEBI" id="CHEBI:57972"/>
        <dbReference type="ChEBI" id="CHEBI:58383"/>
        <dbReference type="EC" id="2.6.1.37"/>
    </reaction>
</comment>
<comment type="cofactor">
    <cofactor evidence="1">
        <name>pyridoxal 5'-phosphate</name>
        <dbReference type="ChEBI" id="CHEBI:597326"/>
    </cofactor>
</comment>
<comment type="subunit">
    <text evidence="1">Homodimer.</text>
</comment>
<comment type="similarity">
    <text evidence="1">Belongs to the class-V pyridoxal-phosphate-dependent aminotransferase family. PhnW subfamily.</text>
</comment>
<proteinExistence type="inferred from homology"/>
<reference key="1">
    <citation type="submission" date="2007-05" db="EMBL/GenBank/DDBJ databases">
        <title>Complete sequence of Pseudomonas putida F1.</title>
        <authorList>
            <consortium name="US DOE Joint Genome Institute"/>
            <person name="Copeland A."/>
            <person name="Lucas S."/>
            <person name="Lapidus A."/>
            <person name="Barry K."/>
            <person name="Detter J.C."/>
            <person name="Glavina del Rio T."/>
            <person name="Hammon N."/>
            <person name="Israni S."/>
            <person name="Dalin E."/>
            <person name="Tice H."/>
            <person name="Pitluck S."/>
            <person name="Chain P."/>
            <person name="Malfatti S."/>
            <person name="Shin M."/>
            <person name="Vergez L."/>
            <person name="Schmutz J."/>
            <person name="Larimer F."/>
            <person name="Land M."/>
            <person name="Hauser L."/>
            <person name="Kyrpides N."/>
            <person name="Lykidis A."/>
            <person name="Parales R."/>
            <person name="Richardson P."/>
        </authorList>
    </citation>
    <scope>NUCLEOTIDE SEQUENCE [LARGE SCALE GENOMIC DNA]</scope>
    <source>
        <strain>ATCC 700007 / DSM 6899 / JCM 31910 / BCRC 17059 / LMG 24140 / F1</strain>
    </source>
</reference>
<keyword id="KW-0032">Aminotransferase</keyword>
<keyword id="KW-0663">Pyridoxal phosphate</keyword>
<keyword id="KW-0670">Pyruvate</keyword>
<keyword id="KW-0808">Transferase</keyword>
<name>PHNW_PSEP1</name>
<gene>
    <name evidence="1" type="primary">phnW</name>
    <name type="ordered locus">Pput_3529</name>
</gene>
<sequence>MSNAPILLTPGPLTTSIRTRQAMLVDWGSWDRDFNQLTASVCEQLLAIIDGASSHHCVPLQGSGTFAVEAAIGTLVPRDGKVLVLINGAYGQRLAKICKVLGRTYSTFETAEDQPTTAADVDRLLAEDSAITHVALIHCETSTGILNPLPEIAQVIKHHGKRLIIDAMSSFGALPIDAREIPFEALIAASGKCLEGVPGMGFVFAEKNALAAAEGNAHSLAMDLHDQHAYMAKTGQWRFTPPTHVVAALHEALQQYNEEGGLPARHQRYADNCKTLLDGMAAIGLRSFLPAEIQAPIIVTFHAPTDARYQFKDFYERVKAKGFILYPGKLTQVETFRVGCIGVVGADGMQAAVNAVAEVLREMEVLDI</sequence>
<dbReference type="EC" id="2.6.1.37" evidence="1"/>
<dbReference type="EMBL" id="CP000712">
    <property type="protein sequence ID" value="ABQ79655.1"/>
    <property type="molecule type" value="Genomic_DNA"/>
</dbReference>
<dbReference type="SMR" id="A5W695"/>
<dbReference type="KEGG" id="ppf:Pput_3529"/>
<dbReference type="eggNOG" id="COG0075">
    <property type="taxonomic scope" value="Bacteria"/>
</dbReference>
<dbReference type="HOGENOM" id="CLU_027686_3_1_6"/>
<dbReference type="GO" id="GO:0047304">
    <property type="term" value="F:2-aminoethylphosphonate-pyruvate transaminase activity"/>
    <property type="evidence" value="ECO:0007669"/>
    <property type="project" value="UniProtKB-UniRule"/>
</dbReference>
<dbReference type="GO" id="GO:0019700">
    <property type="term" value="P:organic phosphonate catabolic process"/>
    <property type="evidence" value="ECO:0007669"/>
    <property type="project" value="InterPro"/>
</dbReference>
<dbReference type="Gene3D" id="3.90.1150.10">
    <property type="entry name" value="Aspartate Aminotransferase, domain 1"/>
    <property type="match status" value="1"/>
</dbReference>
<dbReference type="Gene3D" id="3.40.640.10">
    <property type="entry name" value="Type I PLP-dependent aspartate aminotransferase-like (Major domain)"/>
    <property type="match status" value="1"/>
</dbReference>
<dbReference type="HAMAP" id="MF_01376">
    <property type="entry name" value="PhnW_aminotrans_5"/>
    <property type="match status" value="1"/>
</dbReference>
<dbReference type="InterPro" id="IPR000192">
    <property type="entry name" value="Aminotrans_V_dom"/>
</dbReference>
<dbReference type="InterPro" id="IPR012703">
    <property type="entry name" value="NH2EtPonate_pyrv_transaminase"/>
</dbReference>
<dbReference type="InterPro" id="IPR015424">
    <property type="entry name" value="PyrdxlP-dep_Trfase"/>
</dbReference>
<dbReference type="InterPro" id="IPR015421">
    <property type="entry name" value="PyrdxlP-dep_Trfase_major"/>
</dbReference>
<dbReference type="InterPro" id="IPR015422">
    <property type="entry name" value="PyrdxlP-dep_Trfase_small"/>
</dbReference>
<dbReference type="InterPro" id="IPR024169">
    <property type="entry name" value="SP_NH2Trfase/AEP_transaminase"/>
</dbReference>
<dbReference type="NCBIfam" id="TIGR03301">
    <property type="entry name" value="PhnW-AepZ"/>
    <property type="match status" value="1"/>
</dbReference>
<dbReference type="NCBIfam" id="NF010006">
    <property type="entry name" value="PRK13479.1"/>
    <property type="match status" value="1"/>
</dbReference>
<dbReference type="NCBIfam" id="TIGR02326">
    <property type="entry name" value="transamin_PhnW"/>
    <property type="match status" value="1"/>
</dbReference>
<dbReference type="PANTHER" id="PTHR42778">
    <property type="entry name" value="2-AMINOETHYLPHOSPHONATE--PYRUVATE TRANSAMINASE"/>
    <property type="match status" value="1"/>
</dbReference>
<dbReference type="PANTHER" id="PTHR42778:SF1">
    <property type="entry name" value="2-AMINOETHYLPHOSPHONATE--PYRUVATE TRANSAMINASE"/>
    <property type="match status" value="1"/>
</dbReference>
<dbReference type="Pfam" id="PF00266">
    <property type="entry name" value="Aminotran_5"/>
    <property type="match status" value="1"/>
</dbReference>
<dbReference type="PIRSF" id="PIRSF000524">
    <property type="entry name" value="SPT"/>
    <property type="match status" value="1"/>
</dbReference>
<dbReference type="SUPFAM" id="SSF53383">
    <property type="entry name" value="PLP-dependent transferases"/>
    <property type="match status" value="1"/>
</dbReference>
<protein>
    <recommendedName>
        <fullName evidence="1">2-aminoethylphosphonate--pyruvate transaminase</fullName>
        <ecNumber evidence="1">2.6.1.37</ecNumber>
    </recommendedName>
    <alternativeName>
        <fullName evidence="1">2-aminoethylphosphonate aminotransferase</fullName>
    </alternativeName>
    <alternativeName>
        <fullName evidence="1">AEP transaminase</fullName>
        <shortName evidence="1">AEPT</shortName>
    </alternativeName>
</protein>
<evidence type="ECO:0000255" key="1">
    <source>
        <dbReference type="HAMAP-Rule" id="MF_01376"/>
    </source>
</evidence>
<accession>A5W695</accession>
<feature type="chain" id="PRO_1000068249" description="2-aminoethylphosphonate--pyruvate transaminase">
    <location>
        <begin position="1"/>
        <end position="368"/>
    </location>
</feature>
<feature type="modified residue" description="N6-(pyridoxal phosphate)lysine" evidence="1">
    <location>
        <position position="192"/>
    </location>
</feature>
<organism>
    <name type="scientific">Pseudomonas putida (strain ATCC 700007 / DSM 6899 / JCM 31910 / BCRC 17059 / LMG 24140 / F1)</name>
    <dbReference type="NCBI Taxonomy" id="351746"/>
    <lineage>
        <taxon>Bacteria</taxon>
        <taxon>Pseudomonadati</taxon>
        <taxon>Pseudomonadota</taxon>
        <taxon>Gammaproteobacteria</taxon>
        <taxon>Pseudomonadales</taxon>
        <taxon>Pseudomonadaceae</taxon>
        <taxon>Pseudomonas</taxon>
    </lineage>
</organism>